<organism>
    <name type="scientific">Shouchella clausii (strain KSM-K16)</name>
    <name type="common">Alkalihalobacillus clausii</name>
    <dbReference type="NCBI Taxonomy" id="66692"/>
    <lineage>
        <taxon>Bacteria</taxon>
        <taxon>Bacillati</taxon>
        <taxon>Bacillota</taxon>
        <taxon>Bacilli</taxon>
        <taxon>Bacillales</taxon>
        <taxon>Bacillaceae</taxon>
        <taxon>Shouchella</taxon>
    </lineage>
</organism>
<evidence type="ECO:0000255" key="1">
    <source>
        <dbReference type="HAMAP-Rule" id="MF_01393"/>
    </source>
</evidence>
<keyword id="KW-0066">ATP synthesis</keyword>
<keyword id="KW-1003">Cell membrane</keyword>
<keyword id="KW-0138">CF(0)</keyword>
<keyword id="KW-0375">Hydrogen ion transport</keyword>
<keyword id="KW-0406">Ion transport</keyword>
<keyword id="KW-0472">Membrane</keyword>
<keyword id="KW-1185">Reference proteome</keyword>
<keyword id="KW-0812">Transmembrane</keyword>
<keyword id="KW-1133">Transmembrane helix</keyword>
<keyword id="KW-0813">Transport</keyword>
<feature type="chain" id="PRO_1000145260" description="ATP synthase subunit a">
    <location>
        <begin position="1"/>
        <end position="238"/>
    </location>
</feature>
<feature type="transmembrane region" description="Helical" evidence="1">
    <location>
        <begin position="18"/>
        <end position="38"/>
    </location>
</feature>
<feature type="transmembrane region" description="Helical" evidence="1">
    <location>
        <begin position="76"/>
        <end position="96"/>
    </location>
</feature>
<feature type="transmembrane region" description="Helical" evidence="1">
    <location>
        <begin position="117"/>
        <end position="137"/>
    </location>
</feature>
<feature type="transmembrane region" description="Helical" evidence="1">
    <location>
        <begin position="173"/>
        <end position="193"/>
    </location>
</feature>
<feature type="transmembrane region" description="Helical" evidence="1">
    <location>
        <begin position="208"/>
        <end position="230"/>
    </location>
</feature>
<proteinExistence type="inferred from homology"/>
<comment type="function">
    <text evidence="1">Key component of the proton channel; it plays a direct role in the translocation of protons across the membrane.</text>
</comment>
<comment type="subunit">
    <text evidence="1">F-type ATPases have 2 components, CF(1) - the catalytic core - and CF(0) - the membrane proton channel. CF(1) has five subunits: alpha(3), beta(3), gamma(1), delta(1), epsilon(1). CF(0) has three main subunits: a(1), b(2) and c(9-12). The alpha and beta chains form an alternating ring which encloses part of the gamma chain. CF(1) is attached to CF(0) by a central stalk formed by the gamma and epsilon chains, while a peripheral stalk is formed by the delta and b chains.</text>
</comment>
<comment type="subcellular location">
    <subcellularLocation>
        <location evidence="1">Cell membrane</location>
        <topology evidence="1">Multi-pass membrane protein</topology>
    </subcellularLocation>
</comment>
<comment type="similarity">
    <text evidence="1">Belongs to the ATPase A chain family.</text>
</comment>
<protein>
    <recommendedName>
        <fullName evidence="1">ATP synthase subunit a</fullName>
    </recommendedName>
    <alternativeName>
        <fullName evidence="1">ATP synthase F0 sector subunit a</fullName>
    </alternativeName>
    <alternativeName>
        <fullName evidence="1">F-ATPase subunit 6</fullName>
    </alternativeName>
</protein>
<reference key="1">
    <citation type="submission" date="2003-10" db="EMBL/GenBank/DDBJ databases">
        <title>The complete genome sequence of the alkaliphilic Bacillus clausii KSM-K16.</title>
        <authorList>
            <person name="Takaki Y."/>
            <person name="Kageyama Y."/>
            <person name="Shimamura S."/>
            <person name="Suzuki H."/>
            <person name="Nishi S."/>
            <person name="Hatada Y."/>
            <person name="Kawai S."/>
            <person name="Ito S."/>
            <person name="Horikoshi K."/>
        </authorList>
    </citation>
    <scope>NUCLEOTIDE SEQUENCE [LARGE SCALE GENOMIC DNA]</scope>
    <source>
        <strain>KSM-K16</strain>
    </source>
</reference>
<sequence>MPEHHQYQFEFMGLLFNGTTMITTTIAMAIVVIITVIGCRKLAMRPTGLQNFIEWVVDFCRGIIKANMDWKVGGRFIVLAYALLFYVFVANMMGIPFELVTKEGHNVFWKSPTSDPVLTLTMAVFIVVLTHIYGIMVTGPSTYGKSWFTPKWFLFPFKVIEEGSNALTLGMRLFGNIYAKEILMLLLVSLGTTAVYWGIFAFVPLIVWQAFSIFIGSLQAYIFAMLAMVYMSHKVEQH</sequence>
<name>ATP6_SHOC1</name>
<accession>Q5WB72</accession>
<dbReference type="EMBL" id="AP006627">
    <property type="protein sequence ID" value="BAD66388.1"/>
    <property type="molecule type" value="Genomic_DNA"/>
</dbReference>
<dbReference type="RefSeq" id="WP_011248691.1">
    <property type="nucleotide sequence ID" value="NC_006582.1"/>
</dbReference>
<dbReference type="SMR" id="Q5WB72"/>
<dbReference type="STRING" id="66692.ABC3857"/>
<dbReference type="GeneID" id="86928182"/>
<dbReference type="KEGG" id="bcl:ABC3857"/>
<dbReference type="eggNOG" id="COG0356">
    <property type="taxonomic scope" value="Bacteria"/>
</dbReference>
<dbReference type="HOGENOM" id="CLU_041018_2_3_9"/>
<dbReference type="OrthoDB" id="9789241at2"/>
<dbReference type="Proteomes" id="UP000001168">
    <property type="component" value="Chromosome"/>
</dbReference>
<dbReference type="GO" id="GO:0005886">
    <property type="term" value="C:plasma membrane"/>
    <property type="evidence" value="ECO:0007669"/>
    <property type="project" value="UniProtKB-SubCell"/>
</dbReference>
<dbReference type="GO" id="GO:0045259">
    <property type="term" value="C:proton-transporting ATP synthase complex"/>
    <property type="evidence" value="ECO:0007669"/>
    <property type="project" value="UniProtKB-KW"/>
</dbReference>
<dbReference type="GO" id="GO:0046933">
    <property type="term" value="F:proton-transporting ATP synthase activity, rotational mechanism"/>
    <property type="evidence" value="ECO:0007669"/>
    <property type="project" value="UniProtKB-UniRule"/>
</dbReference>
<dbReference type="GO" id="GO:0042777">
    <property type="term" value="P:proton motive force-driven plasma membrane ATP synthesis"/>
    <property type="evidence" value="ECO:0007669"/>
    <property type="project" value="TreeGrafter"/>
</dbReference>
<dbReference type="CDD" id="cd00310">
    <property type="entry name" value="ATP-synt_Fo_a_6"/>
    <property type="match status" value="1"/>
</dbReference>
<dbReference type="Gene3D" id="1.20.120.220">
    <property type="entry name" value="ATP synthase, F0 complex, subunit A"/>
    <property type="match status" value="1"/>
</dbReference>
<dbReference type="HAMAP" id="MF_01393">
    <property type="entry name" value="ATP_synth_a_bact"/>
    <property type="match status" value="1"/>
</dbReference>
<dbReference type="InterPro" id="IPR045082">
    <property type="entry name" value="ATP_syn_F0_a_bact/chloroplast"/>
</dbReference>
<dbReference type="InterPro" id="IPR000568">
    <property type="entry name" value="ATP_synth_F0_asu"/>
</dbReference>
<dbReference type="InterPro" id="IPR023011">
    <property type="entry name" value="ATP_synth_F0_asu_AS"/>
</dbReference>
<dbReference type="InterPro" id="IPR035908">
    <property type="entry name" value="F0_ATP_A_sf"/>
</dbReference>
<dbReference type="NCBIfam" id="TIGR01131">
    <property type="entry name" value="ATP_synt_6_or_A"/>
    <property type="match status" value="1"/>
</dbReference>
<dbReference type="NCBIfam" id="NF004479">
    <property type="entry name" value="PRK05815.1-4"/>
    <property type="match status" value="1"/>
</dbReference>
<dbReference type="PANTHER" id="PTHR42823">
    <property type="entry name" value="ATP SYNTHASE SUBUNIT A, CHLOROPLASTIC"/>
    <property type="match status" value="1"/>
</dbReference>
<dbReference type="PANTHER" id="PTHR42823:SF3">
    <property type="entry name" value="ATP SYNTHASE SUBUNIT A, CHLOROPLASTIC"/>
    <property type="match status" value="1"/>
</dbReference>
<dbReference type="Pfam" id="PF00119">
    <property type="entry name" value="ATP-synt_A"/>
    <property type="match status" value="1"/>
</dbReference>
<dbReference type="PRINTS" id="PR00123">
    <property type="entry name" value="ATPASEA"/>
</dbReference>
<dbReference type="SUPFAM" id="SSF81336">
    <property type="entry name" value="F1F0 ATP synthase subunit A"/>
    <property type="match status" value="1"/>
</dbReference>
<dbReference type="PROSITE" id="PS00449">
    <property type="entry name" value="ATPASE_A"/>
    <property type="match status" value="1"/>
</dbReference>
<gene>
    <name evidence="1" type="primary">atpB</name>
    <name type="ordered locus">ABC3857</name>
</gene>